<gene>
    <name evidence="1" type="primary">rplU</name>
    <name type="ordered locus">BceJ2315_33800</name>
    <name type="ORF">BCAL3442</name>
</gene>
<proteinExistence type="inferred from homology"/>
<dbReference type="EMBL" id="AM747720">
    <property type="protein sequence ID" value="CAR53765.1"/>
    <property type="molecule type" value="Genomic_DNA"/>
</dbReference>
<dbReference type="RefSeq" id="WP_006025184.1">
    <property type="nucleotide sequence ID" value="NC_011000.1"/>
</dbReference>
<dbReference type="SMR" id="B4E5X2"/>
<dbReference type="GeneID" id="98106574"/>
<dbReference type="KEGG" id="bcj:BCAL3442"/>
<dbReference type="eggNOG" id="COG0261">
    <property type="taxonomic scope" value="Bacteria"/>
</dbReference>
<dbReference type="HOGENOM" id="CLU_061463_3_1_4"/>
<dbReference type="BioCyc" id="BCEN216591:G1G1V-3826-MONOMER"/>
<dbReference type="Proteomes" id="UP000001035">
    <property type="component" value="Chromosome 1"/>
</dbReference>
<dbReference type="GO" id="GO:0005737">
    <property type="term" value="C:cytoplasm"/>
    <property type="evidence" value="ECO:0007669"/>
    <property type="project" value="UniProtKB-ARBA"/>
</dbReference>
<dbReference type="GO" id="GO:1990904">
    <property type="term" value="C:ribonucleoprotein complex"/>
    <property type="evidence" value="ECO:0007669"/>
    <property type="project" value="UniProtKB-KW"/>
</dbReference>
<dbReference type="GO" id="GO:0005840">
    <property type="term" value="C:ribosome"/>
    <property type="evidence" value="ECO:0007669"/>
    <property type="project" value="UniProtKB-KW"/>
</dbReference>
<dbReference type="GO" id="GO:0019843">
    <property type="term" value="F:rRNA binding"/>
    <property type="evidence" value="ECO:0007669"/>
    <property type="project" value="UniProtKB-UniRule"/>
</dbReference>
<dbReference type="GO" id="GO:0003735">
    <property type="term" value="F:structural constituent of ribosome"/>
    <property type="evidence" value="ECO:0007669"/>
    <property type="project" value="InterPro"/>
</dbReference>
<dbReference type="GO" id="GO:0006412">
    <property type="term" value="P:translation"/>
    <property type="evidence" value="ECO:0007669"/>
    <property type="project" value="UniProtKB-UniRule"/>
</dbReference>
<dbReference type="HAMAP" id="MF_01363">
    <property type="entry name" value="Ribosomal_bL21"/>
    <property type="match status" value="1"/>
</dbReference>
<dbReference type="InterPro" id="IPR028909">
    <property type="entry name" value="bL21-like"/>
</dbReference>
<dbReference type="InterPro" id="IPR036164">
    <property type="entry name" value="bL21-like_sf"/>
</dbReference>
<dbReference type="InterPro" id="IPR001787">
    <property type="entry name" value="Ribosomal_bL21"/>
</dbReference>
<dbReference type="InterPro" id="IPR018258">
    <property type="entry name" value="Ribosomal_bL21_CS"/>
</dbReference>
<dbReference type="NCBIfam" id="TIGR00061">
    <property type="entry name" value="L21"/>
    <property type="match status" value="1"/>
</dbReference>
<dbReference type="PANTHER" id="PTHR21349">
    <property type="entry name" value="50S RIBOSOMAL PROTEIN L21"/>
    <property type="match status" value="1"/>
</dbReference>
<dbReference type="PANTHER" id="PTHR21349:SF0">
    <property type="entry name" value="LARGE RIBOSOMAL SUBUNIT PROTEIN BL21M"/>
    <property type="match status" value="1"/>
</dbReference>
<dbReference type="Pfam" id="PF00829">
    <property type="entry name" value="Ribosomal_L21p"/>
    <property type="match status" value="1"/>
</dbReference>
<dbReference type="SUPFAM" id="SSF141091">
    <property type="entry name" value="L21p-like"/>
    <property type="match status" value="1"/>
</dbReference>
<dbReference type="PROSITE" id="PS01169">
    <property type="entry name" value="RIBOSOMAL_L21"/>
    <property type="match status" value="1"/>
</dbReference>
<reference key="1">
    <citation type="journal article" date="2009" name="J. Bacteriol.">
        <title>The genome of Burkholderia cenocepacia J2315, an epidemic pathogen of cystic fibrosis patients.</title>
        <authorList>
            <person name="Holden M.T."/>
            <person name="Seth-Smith H.M."/>
            <person name="Crossman L.C."/>
            <person name="Sebaihia M."/>
            <person name="Bentley S.D."/>
            <person name="Cerdeno-Tarraga A.M."/>
            <person name="Thomson N.R."/>
            <person name="Bason N."/>
            <person name="Quail M.A."/>
            <person name="Sharp S."/>
            <person name="Cherevach I."/>
            <person name="Churcher C."/>
            <person name="Goodhead I."/>
            <person name="Hauser H."/>
            <person name="Holroyd N."/>
            <person name="Mungall K."/>
            <person name="Scott P."/>
            <person name="Walker D."/>
            <person name="White B."/>
            <person name="Rose H."/>
            <person name="Iversen P."/>
            <person name="Mil-Homens D."/>
            <person name="Rocha E.P."/>
            <person name="Fialho A.M."/>
            <person name="Baldwin A."/>
            <person name="Dowson C."/>
            <person name="Barrell B.G."/>
            <person name="Govan J.R."/>
            <person name="Vandamme P."/>
            <person name="Hart C.A."/>
            <person name="Mahenthiralingam E."/>
            <person name="Parkhill J."/>
        </authorList>
    </citation>
    <scope>NUCLEOTIDE SEQUENCE [LARGE SCALE GENOMIC DNA]</scope>
    <source>
        <strain>ATCC BAA-245 / DSM 16553 / LMG 16656 / NCTC 13227 / J2315 / CF5610</strain>
    </source>
</reference>
<accession>B4E5X2</accession>
<keyword id="KW-0687">Ribonucleoprotein</keyword>
<keyword id="KW-0689">Ribosomal protein</keyword>
<keyword id="KW-0694">RNA-binding</keyword>
<keyword id="KW-0699">rRNA-binding</keyword>
<feature type="chain" id="PRO_1000143765" description="Large ribosomal subunit protein bL21">
    <location>
        <begin position="1"/>
        <end position="103"/>
    </location>
</feature>
<protein>
    <recommendedName>
        <fullName evidence="1">Large ribosomal subunit protein bL21</fullName>
    </recommendedName>
    <alternativeName>
        <fullName evidence="2">50S ribosomal protein L21</fullName>
    </alternativeName>
</protein>
<comment type="function">
    <text evidence="1">This protein binds to 23S rRNA in the presence of protein L20.</text>
</comment>
<comment type="subunit">
    <text evidence="1">Part of the 50S ribosomal subunit. Contacts protein L20.</text>
</comment>
<comment type="similarity">
    <text evidence="1">Belongs to the bacterial ribosomal protein bL21 family.</text>
</comment>
<name>RL21_BURCJ</name>
<sequence length="103" mass="11356">MYAVIKTGGKQYKVAVGEKLKVEQIPADIDAEITLDQVLAVGEGESIKFGTPLVSGASVKATVVSHGRHAKVTIFKMRRRKHYQKHGGHRQNYTELRIDAINA</sequence>
<evidence type="ECO:0000255" key="1">
    <source>
        <dbReference type="HAMAP-Rule" id="MF_01363"/>
    </source>
</evidence>
<evidence type="ECO:0000305" key="2"/>
<organism>
    <name type="scientific">Burkholderia cenocepacia (strain ATCC BAA-245 / DSM 16553 / LMG 16656 / NCTC 13227 / J2315 / CF5610)</name>
    <name type="common">Burkholderia cepacia (strain J2315)</name>
    <dbReference type="NCBI Taxonomy" id="216591"/>
    <lineage>
        <taxon>Bacteria</taxon>
        <taxon>Pseudomonadati</taxon>
        <taxon>Pseudomonadota</taxon>
        <taxon>Betaproteobacteria</taxon>
        <taxon>Burkholderiales</taxon>
        <taxon>Burkholderiaceae</taxon>
        <taxon>Burkholderia</taxon>
        <taxon>Burkholderia cepacia complex</taxon>
    </lineage>
</organism>